<keyword id="KW-1185">Reference proteome</keyword>
<keyword id="KW-0687">Ribonucleoprotein</keyword>
<keyword id="KW-0689">Ribosomal protein</keyword>
<feature type="initiator methionine" description="Removed" evidence="1">
    <location>
        <position position="1"/>
    </location>
</feature>
<feature type="chain" id="PRO_0000178334" description="Small ribosomal subunit protein bS21">
    <location>
        <begin position="2"/>
        <end position="71"/>
    </location>
</feature>
<feature type="region of interest" description="Disordered" evidence="2">
    <location>
        <begin position="43"/>
        <end position="71"/>
    </location>
</feature>
<feature type="compositionally biased region" description="Basic residues" evidence="2">
    <location>
        <begin position="46"/>
        <end position="59"/>
    </location>
</feature>
<feature type="compositionally biased region" description="Basic and acidic residues" evidence="2">
    <location>
        <begin position="60"/>
        <end position="71"/>
    </location>
</feature>
<protein>
    <recommendedName>
        <fullName evidence="3">Small ribosomal subunit protein bS21</fullName>
    </recommendedName>
    <alternativeName>
        <fullName>30S ribosomal protein S21</fullName>
    </alternativeName>
</protein>
<gene>
    <name type="primary">rpsU</name>
    <name type="ordered locus">Z4418</name>
    <name type="ordered locus">ECs3948</name>
</gene>
<accession>P68681</accession>
<accession>P02379</accession>
<accession>Q8ZI69</accession>
<name>RS21_ECO57</name>
<evidence type="ECO:0000250" key="1"/>
<evidence type="ECO:0000256" key="2">
    <source>
        <dbReference type="SAM" id="MobiDB-lite"/>
    </source>
</evidence>
<evidence type="ECO:0000305" key="3"/>
<organism>
    <name type="scientific">Escherichia coli O157:H7</name>
    <dbReference type="NCBI Taxonomy" id="83334"/>
    <lineage>
        <taxon>Bacteria</taxon>
        <taxon>Pseudomonadati</taxon>
        <taxon>Pseudomonadota</taxon>
        <taxon>Gammaproteobacteria</taxon>
        <taxon>Enterobacterales</taxon>
        <taxon>Enterobacteriaceae</taxon>
        <taxon>Escherichia</taxon>
    </lineage>
</organism>
<comment type="similarity">
    <text evidence="3">Belongs to the bacterial ribosomal protein bS21 family.</text>
</comment>
<dbReference type="EMBL" id="AE005174">
    <property type="protein sequence ID" value="AAG58199.1"/>
    <property type="molecule type" value="Genomic_DNA"/>
</dbReference>
<dbReference type="EMBL" id="BA000007">
    <property type="protein sequence ID" value="BAB37371.1"/>
    <property type="molecule type" value="Genomic_DNA"/>
</dbReference>
<dbReference type="PIR" id="C85967">
    <property type="entry name" value="C85967"/>
</dbReference>
<dbReference type="PIR" id="D91122">
    <property type="entry name" value="D91122"/>
</dbReference>
<dbReference type="RefSeq" id="NP_311975.1">
    <property type="nucleotide sequence ID" value="NC_002695.1"/>
</dbReference>
<dbReference type="RefSeq" id="WP_001144069.1">
    <property type="nucleotide sequence ID" value="NZ_VOAI01000009.1"/>
</dbReference>
<dbReference type="SMR" id="P68681"/>
<dbReference type="STRING" id="155864.Z4418"/>
<dbReference type="GeneID" id="916223"/>
<dbReference type="GeneID" id="98390195"/>
<dbReference type="KEGG" id="ece:Z4418"/>
<dbReference type="KEGG" id="ecs:ECs_3948"/>
<dbReference type="PATRIC" id="fig|386585.9.peg.4118"/>
<dbReference type="eggNOG" id="COG0828">
    <property type="taxonomic scope" value="Bacteria"/>
</dbReference>
<dbReference type="HOGENOM" id="CLU_159258_1_0_6"/>
<dbReference type="OMA" id="HQHFEKP"/>
<dbReference type="Proteomes" id="UP000000558">
    <property type="component" value="Chromosome"/>
</dbReference>
<dbReference type="Proteomes" id="UP000002519">
    <property type="component" value="Chromosome"/>
</dbReference>
<dbReference type="GO" id="GO:1990904">
    <property type="term" value="C:ribonucleoprotein complex"/>
    <property type="evidence" value="ECO:0007669"/>
    <property type="project" value="UniProtKB-KW"/>
</dbReference>
<dbReference type="GO" id="GO:0005840">
    <property type="term" value="C:ribosome"/>
    <property type="evidence" value="ECO:0007669"/>
    <property type="project" value="UniProtKB-KW"/>
</dbReference>
<dbReference type="GO" id="GO:0003735">
    <property type="term" value="F:structural constituent of ribosome"/>
    <property type="evidence" value="ECO:0007669"/>
    <property type="project" value="InterPro"/>
</dbReference>
<dbReference type="GO" id="GO:0006412">
    <property type="term" value="P:translation"/>
    <property type="evidence" value="ECO:0007669"/>
    <property type="project" value="UniProtKB-UniRule"/>
</dbReference>
<dbReference type="FunFam" id="1.20.5.1150:FF:000001">
    <property type="entry name" value="30S ribosomal protein S21"/>
    <property type="match status" value="1"/>
</dbReference>
<dbReference type="Gene3D" id="1.20.5.1150">
    <property type="entry name" value="Ribosomal protein S8"/>
    <property type="match status" value="1"/>
</dbReference>
<dbReference type="HAMAP" id="MF_00358">
    <property type="entry name" value="Ribosomal_bS21"/>
    <property type="match status" value="1"/>
</dbReference>
<dbReference type="InterPro" id="IPR001911">
    <property type="entry name" value="Ribosomal_bS21"/>
</dbReference>
<dbReference type="InterPro" id="IPR018278">
    <property type="entry name" value="Ribosomal_bS21_CS"/>
</dbReference>
<dbReference type="InterPro" id="IPR038380">
    <property type="entry name" value="Ribosomal_bS21_sf"/>
</dbReference>
<dbReference type="NCBIfam" id="TIGR00030">
    <property type="entry name" value="S21p"/>
    <property type="match status" value="1"/>
</dbReference>
<dbReference type="PANTHER" id="PTHR21109">
    <property type="entry name" value="MITOCHONDRIAL 28S RIBOSOMAL PROTEIN S21"/>
    <property type="match status" value="1"/>
</dbReference>
<dbReference type="PANTHER" id="PTHR21109:SF22">
    <property type="entry name" value="SMALL RIBOSOMAL SUBUNIT PROTEIN BS21"/>
    <property type="match status" value="1"/>
</dbReference>
<dbReference type="Pfam" id="PF01165">
    <property type="entry name" value="Ribosomal_S21"/>
    <property type="match status" value="1"/>
</dbReference>
<dbReference type="PRINTS" id="PR00976">
    <property type="entry name" value="RIBOSOMALS21"/>
</dbReference>
<dbReference type="PROSITE" id="PS01181">
    <property type="entry name" value="RIBOSOMAL_S21"/>
    <property type="match status" value="1"/>
</dbReference>
<sequence length="71" mass="8500">MPVIKVRENEPFDVALRRFKRSCEKAGVLAEVRRREFYEKPTTERKRAKASAVKRHAKKLARENARRTRLY</sequence>
<reference key="1">
    <citation type="journal article" date="2001" name="Nature">
        <title>Genome sequence of enterohaemorrhagic Escherichia coli O157:H7.</title>
        <authorList>
            <person name="Perna N.T."/>
            <person name="Plunkett G. III"/>
            <person name="Burland V."/>
            <person name="Mau B."/>
            <person name="Glasner J.D."/>
            <person name="Rose D.J."/>
            <person name="Mayhew G.F."/>
            <person name="Evans P.S."/>
            <person name="Gregor J."/>
            <person name="Kirkpatrick H.A."/>
            <person name="Posfai G."/>
            <person name="Hackett J."/>
            <person name="Klink S."/>
            <person name="Boutin A."/>
            <person name="Shao Y."/>
            <person name="Miller L."/>
            <person name="Grotbeck E.J."/>
            <person name="Davis N.W."/>
            <person name="Lim A."/>
            <person name="Dimalanta E.T."/>
            <person name="Potamousis K."/>
            <person name="Apodaca J."/>
            <person name="Anantharaman T.S."/>
            <person name="Lin J."/>
            <person name="Yen G."/>
            <person name="Schwartz D.C."/>
            <person name="Welch R.A."/>
            <person name="Blattner F.R."/>
        </authorList>
    </citation>
    <scope>NUCLEOTIDE SEQUENCE [LARGE SCALE GENOMIC DNA]</scope>
    <source>
        <strain>O157:H7 / EDL933 / ATCC 700927 / EHEC</strain>
    </source>
</reference>
<reference key="2">
    <citation type="journal article" date="2001" name="DNA Res.">
        <title>Complete genome sequence of enterohemorrhagic Escherichia coli O157:H7 and genomic comparison with a laboratory strain K-12.</title>
        <authorList>
            <person name="Hayashi T."/>
            <person name="Makino K."/>
            <person name="Ohnishi M."/>
            <person name="Kurokawa K."/>
            <person name="Ishii K."/>
            <person name="Yokoyama K."/>
            <person name="Han C.-G."/>
            <person name="Ohtsubo E."/>
            <person name="Nakayama K."/>
            <person name="Murata T."/>
            <person name="Tanaka M."/>
            <person name="Tobe T."/>
            <person name="Iida T."/>
            <person name="Takami H."/>
            <person name="Honda T."/>
            <person name="Sasakawa C."/>
            <person name="Ogasawara N."/>
            <person name="Yasunaga T."/>
            <person name="Kuhara S."/>
            <person name="Shiba T."/>
            <person name="Hattori M."/>
            <person name="Shinagawa H."/>
        </authorList>
    </citation>
    <scope>NUCLEOTIDE SEQUENCE [LARGE SCALE GENOMIC DNA]</scope>
    <source>
        <strain>O157:H7 / Sakai / RIMD 0509952 / EHEC</strain>
    </source>
</reference>
<proteinExistence type="inferred from homology"/>